<keyword id="KW-0687">Ribonucleoprotein</keyword>
<keyword id="KW-0689">Ribosomal protein</keyword>
<keyword id="KW-0694">RNA-binding</keyword>
<keyword id="KW-0699">rRNA-binding</keyword>
<organism>
    <name type="scientific">Shewanella sp. (strain ANA-3)</name>
    <dbReference type="NCBI Taxonomy" id="94122"/>
    <lineage>
        <taxon>Bacteria</taxon>
        <taxon>Pseudomonadati</taxon>
        <taxon>Pseudomonadota</taxon>
        <taxon>Gammaproteobacteria</taxon>
        <taxon>Alteromonadales</taxon>
        <taxon>Shewanellaceae</taxon>
        <taxon>Shewanella</taxon>
    </lineage>
</organism>
<accession>A0KRN9</accession>
<evidence type="ECO:0000255" key="1">
    <source>
        <dbReference type="HAMAP-Rule" id="MF_01365"/>
    </source>
</evidence>
<evidence type="ECO:0000256" key="2">
    <source>
        <dbReference type="SAM" id="MobiDB-lite"/>
    </source>
</evidence>
<evidence type="ECO:0000305" key="3"/>
<proteinExistence type="inferred from homology"/>
<name>RL6_SHESA</name>
<feature type="chain" id="PRO_1000055307" description="Large ribosomal subunit protein uL6">
    <location>
        <begin position="1"/>
        <end position="177"/>
    </location>
</feature>
<feature type="region of interest" description="Disordered" evidence="2">
    <location>
        <begin position="152"/>
        <end position="177"/>
    </location>
</feature>
<feature type="compositionally biased region" description="Basic and acidic residues" evidence="2">
    <location>
        <begin position="152"/>
        <end position="171"/>
    </location>
</feature>
<comment type="function">
    <text evidence="1">This protein binds to the 23S rRNA, and is important in its secondary structure. It is located near the subunit interface in the base of the L7/L12 stalk, and near the tRNA binding site of the peptidyltransferase center.</text>
</comment>
<comment type="subunit">
    <text evidence="1">Part of the 50S ribosomal subunit.</text>
</comment>
<comment type="similarity">
    <text evidence="1">Belongs to the universal ribosomal protein uL6 family.</text>
</comment>
<gene>
    <name evidence="1" type="primary">rplF</name>
    <name type="ordered locus">Shewana3_0214</name>
</gene>
<reference key="1">
    <citation type="submission" date="2006-09" db="EMBL/GenBank/DDBJ databases">
        <title>Complete sequence of chromosome 1 of Shewanella sp. ANA-3.</title>
        <authorList>
            <person name="Copeland A."/>
            <person name="Lucas S."/>
            <person name="Lapidus A."/>
            <person name="Barry K."/>
            <person name="Detter J.C."/>
            <person name="Glavina del Rio T."/>
            <person name="Hammon N."/>
            <person name="Israni S."/>
            <person name="Dalin E."/>
            <person name="Tice H."/>
            <person name="Pitluck S."/>
            <person name="Chertkov O."/>
            <person name="Brettin T."/>
            <person name="Bruce D."/>
            <person name="Han C."/>
            <person name="Tapia R."/>
            <person name="Gilna P."/>
            <person name="Schmutz J."/>
            <person name="Larimer F."/>
            <person name="Land M."/>
            <person name="Hauser L."/>
            <person name="Kyrpides N."/>
            <person name="Kim E."/>
            <person name="Newman D."/>
            <person name="Salticov C."/>
            <person name="Konstantinidis K."/>
            <person name="Klappenback J."/>
            <person name="Tiedje J."/>
            <person name="Richardson P."/>
        </authorList>
    </citation>
    <scope>NUCLEOTIDE SEQUENCE [LARGE SCALE GENOMIC DNA]</scope>
    <source>
        <strain>ANA-3</strain>
    </source>
</reference>
<sequence length="177" mass="18940">MSRVAKAPVSIPAGVEVTLNEQTLTVKGAKGSLTRVINNAVNVVIEDGVIKFLPVEGAVGAWAQAGTTRALVNNMVVGVSQGFERKLKLVGVGYRAKLVGSDIDLTLGFSHPLVHKLPAGVTAECPSQTDIVLRGVDKQLIGQVAAEIRGYRPPEPYKGKGVRYDDEEVRRKEAKKK</sequence>
<dbReference type="EMBL" id="CP000469">
    <property type="protein sequence ID" value="ABK46458.1"/>
    <property type="molecule type" value="Genomic_DNA"/>
</dbReference>
<dbReference type="RefSeq" id="WP_011715466.1">
    <property type="nucleotide sequence ID" value="NC_008577.1"/>
</dbReference>
<dbReference type="SMR" id="A0KRN9"/>
<dbReference type="STRING" id="94122.Shewana3_0214"/>
<dbReference type="GeneID" id="94726201"/>
<dbReference type="KEGG" id="shn:Shewana3_0214"/>
<dbReference type="eggNOG" id="COG0097">
    <property type="taxonomic scope" value="Bacteria"/>
</dbReference>
<dbReference type="HOGENOM" id="CLU_065464_1_2_6"/>
<dbReference type="OrthoDB" id="9805007at2"/>
<dbReference type="Proteomes" id="UP000002589">
    <property type="component" value="Chromosome"/>
</dbReference>
<dbReference type="GO" id="GO:0022625">
    <property type="term" value="C:cytosolic large ribosomal subunit"/>
    <property type="evidence" value="ECO:0007669"/>
    <property type="project" value="TreeGrafter"/>
</dbReference>
<dbReference type="GO" id="GO:0019843">
    <property type="term" value="F:rRNA binding"/>
    <property type="evidence" value="ECO:0007669"/>
    <property type="project" value="UniProtKB-UniRule"/>
</dbReference>
<dbReference type="GO" id="GO:0003735">
    <property type="term" value="F:structural constituent of ribosome"/>
    <property type="evidence" value="ECO:0007669"/>
    <property type="project" value="InterPro"/>
</dbReference>
<dbReference type="GO" id="GO:0002181">
    <property type="term" value="P:cytoplasmic translation"/>
    <property type="evidence" value="ECO:0007669"/>
    <property type="project" value="TreeGrafter"/>
</dbReference>
<dbReference type="FunFam" id="3.90.930.12:FF:000001">
    <property type="entry name" value="50S ribosomal protein L6"/>
    <property type="match status" value="1"/>
</dbReference>
<dbReference type="FunFam" id="3.90.930.12:FF:000002">
    <property type="entry name" value="50S ribosomal protein L6"/>
    <property type="match status" value="1"/>
</dbReference>
<dbReference type="Gene3D" id="3.90.930.12">
    <property type="entry name" value="Ribosomal protein L6, alpha-beta domain"/>
    <property type="match status" value="2"/>
</dbReference>
<dbReference type="HAMAP" id="MF_01365_B">
    <property type="entry name" value="Ribosomal_uL6_B"/>
    <property type="match status" value="1"/>
</dbReference>
<dbReference type="InterPro" id="IPR000702">
    <property type="entry name" value="Ribosomal_uL6-like"/>
</dbReference>
<dbReference type="InterPro" id="IPR036789">
    <property type="entry name" value="Ribosomal_uL6-like_a/b-dom_sf"/>
</dbReference>
<dbReference type="InterPro" id="IPR020040">
    <property type="entry name" value="Ribosomal_uL6_a/b-dom"/>
</dbReference>
<dbReference type="InterPro" id="IPR019906">
    <property type="entry name" value="Ribosomal_uL6_bac-type"/>
</dbReference>
<dbReference type="InterPro" id="IPR002358">
    <property type="entry name" value="Ribosomal_uL6_CS"/>
</dbReference>
<dbReference type="NCBIfam" id="TIGR03654">
    <property type="entry name" value="L6_bact"/>
    <property type="match status" value="1"/>
</dbReference>
<dbReference type="PANTHER" id="PTHR11655">
    <property type="entry name" value="60S/50S RIBOSOMAL PROTEIN L6/L9"/>
    <property type="match status" value="1"/>
</dbReference>
<dbReference type="PANTHER" id="PTHR11655:SF14">
    <property type="entry name" value="LARGE RIBOSOMAL SUBUNIT PROTEIN UL6M"/>
    <property type="match status" value="1"/>
</dbReference>
<dbReference type="Pfam" id="PF00347">
    <property type="entry name" value="Ribosomal_L6"/>
    <property type="match status" value="2"/>
</dbReference>
<dbReference type="PIRSF" id="PIRSF002162">
    <property type="entry name" value="Ribosomal_L6"/>
    <property type="match status" value="1"/>
</dbReference>
<dbReference type="PRINTS" id="PR00059">
    <property type="entry name" value="RIBOSOMALL6"/>
</dbReference>
<dbReference type="SUPFAM" id="SSF56053">
    <property type="entry name" value="Ribosomal protein L6"/>
    <property type="match status" value="2"/>
</dbReference>
<dbReference type="PROSITE" id="PS00525">
    <property type="entry name" value="RIBOSOMAL_L6_1"/>
    <property type="match status" value="1"/>
</dbReference>
<protein>
    <recommendedName>
        <fullName evidence="1">Large ribosomal subunit protein uL6</fullName>
    </recommendedName>
    <alternativeName>
        <fullName evidence="3">50S ribosomal protein L6</fullName>
    </alternativeName>
</protein>